<feature type="chain" id="PRO_0000147854" description="Phosphoglucosamine mutase">
    <location>
        <begin position="1"/>
        <end position="452"/>
    </location>
</feature>
<feature type="active site" description="Phosphoserine intermediate" evidence="1">
    <location>
        <position position="112"/>
    </location>
</feature>
<feature type="binding site" description="via phosphate group" evidence="1">
    <location>
        <position position="112"/>
    </location>
    <ligand>
        <name>Mg(2+)</name>
        <dbReference type="ChEBI" id="CHEBI:18420"/>
    </ligand>
</feature>
<feature type="binding site" evidence="1">
    <location>
        <position position="251"/>
    </location>
    <ligand>
        <name>Mg(2+)</name>
        <dbReference type="ChEBI" id="CHEBI:18420"/>
    </ligand>
</feature>
<feature type="binding site" evidence="1">
    <location>
        <position position="253"/>
    </location>
    <ligand>
        <name>Mg(2+)</name>
        <dbReference type="ChEBI" id="CHEBI:18420"/>
    </ligand>
</feature>
<feature type="binding site" evidence="1">
    <location>
        <position position="255"/>
    </location>
    <ligand>
        <name>Mg(2+)</name>
        <dbReference type="ChEBI" id="CHEBI:18420"/>
    </ligand>
</feature>
<feature type="modified residue" description="Phosphoserine" evidence="1">
    <location>
        <position position="112"/>
    </location>
</feature>
<evidence type="ECO:0000255" key="1">
    <source>
        <dbReference type="HAMAP-Rule" id="MF_01554"/>
    </source>
</evidence>
<gene>
    <name evidence="1" type="primary">glmM</name>
    <name type="ordered locus">BB1462</name>
</gene>
<name>GLMM_BORBR</name>
<keyword id="KW-0413">Isomerase</keyword>
<keyword id="KW-0460">Magnesium</keyword>
<keyword id="KW-0479">Metal-binding</keyword>
<keyword id="KW-0597">Phosphoprotein</keyword>
<comment type="function">
    <text evidence="1">Catalyzes the conversion of glucosamine-6-phosphate to glucosamine-1-phosphate.</text>
</comment>
<comment type="catalytic activity">
    <reaction evidence="1">
        <text>alpha-D-glucosamine 1-phosphate = D-glucosamine 6-phosphate</text>
        <dbReference type="Rhea" id="RHEA:23424"/>
        <dbReference type="ChEBI" id="CHEBI:58516"/>
        <dbReference type="ChEBI" id="CHEBI:58725"/>
        <dbReference type="EC" id="5.4.2.10"/>
    </reaction>
</comment>
<comment type="cofactor">
    <cofactor evidence="1">
        <name>Mg(2+)</name>
        <dbReference type="ChEBI" id="CHEBI:18420"/>
    </cofactor>
    <text evidence="1">Binds 1 Mg(2+) ion per subunit.</text>
</comment>
<comment type="PTM">
    <text evidence="1">Activated by phosphorylation.</text>
</comment>
<comment type="similarity">
    <text evidence="1">Belongs to the phosphohexose mutase family.</text>
</comment>
<protein>
    <recommendedName>
        <fullName evidence="1">Phosphoglucosamine mutase</fullName>
        <ecNumber evidence="1">5.4.2.10</ecNumber>
    </recommendedName>
</protein>
<dbReference type="EC" id="5.4.2.10" evidence="1"/>
<dbReference type="EMBL" id="BX640441">
    <property type="protein sequence ID" value="CAE31959.1"/>
    <property type="molecule type" value="Genomic_DNA"/>
</dbReference>
<dbReference type="RefSeq" id="WP_003809628.1">
    <property type="nucleotide sequence ID" value="NC_002927.3"/>
</dbReference>
<dbReference type="SMR" id="Q7WMD0"/>
<dbReference type="GeneID" id="93203843"/>
<dbReference type="KEGG" id="bbr:BB1462"/>
<dbReference type="eggNOG" id="COG1109">
    <property type="taxonomic scope" value="Bacteria"/>
</dbReference>
<dbReference type="HOGENOM" id="CLU_016950_7_0_4"/>
<dbReference type="Proteomes" id="UP000001027">
    <property type="component" value="Chromosome"/>
</dbReference>
<dbReference type="GO" id="GO:0005829">
    <property type="term" value="C:cytosol"/>
    <property type="evidence" value="ECO:0007669"/>
    <property type="project" value="TreeGrafter"/>
</dbReference>
<dbReference type="GO" id="GO:0000287">
    <property type="term" value="F:magnesium ion binding"/>
    <property type="evidence" value="ECO:0007669"/>
    <property type="project" value="UniProtKB-UniRule"/>
</dbReference>
<dbReference type="GO" id="GO:0008966">
    <property type="term" value="F:phosphoglucosamine mutase activity"/>
    <property type="evidence" value="ECO:0007669"/>
    <property type="project" value="UniProtKB-UniRule"/>
</dbReference>
<dbReference type="GO" id="GO:0004615">
    <property type="term" value="F:phosphomannomutase activity"/>
    <property type="evidence" value="ECO:0007669"/>
    <property type="project" value="TreeGrafter"/>
</dbReference>
<dbReference type="GO" id="GO:0005975">
    <property type="term" value="P:carbohydrate metabolic process"/>
    <property type="evidence" value="ECO:0007669"/>
    <property type="project" value="InterPro"/>
</dbReference>
<dbReference type="GO" id="GO:0009252">
    <property type="term" value="P:peptidoglycan biosynthetic process"/>
    <property type="evidence" value="ECO:0007669"/>
    <property type="project" value="TreeGrafter"/>
</dbReference>
<dbReference type="GO" id="GO:0006048">
    <property type="term" value="P:UDP-N-acetylglucosamine biosynthetic process"/>
    <property type="evidence" value="ECO:0007669"/>
    <property type="project" value="TreeGrafter"/>
</dbReference>
<dbReference type="CDD" id="cd05802">
    <property type="entry name" value="GlmM"/>
    <property type="match status" value="1"/>
</dbReference>
<dbReference type="FunFam" id="3.40.120.10:FF:000001">
    <property type="entry name" value="Phosphoglucosamine mutase"/>
    <property type="match status" value="1"/>
</dbReference>
<dbReference type="FunFam" id="3.40.120.10:FF:000003">
    <property type="entry name" value="Phosphoglucosamine mutase"/>
    <property type="match status" value="1"/>
</dbReference>
<dbReference type="Gene3D" id="3.40.120.10">
    <property type="entry name" value="Alpha-D-Glucose-1,6-Bisphosphate, subunit A, domain 3"/>
    <property type="match status" value="3"/>
</dbReference>
<dbReference type="Gene3D" id="3.30.310.50">
    <property type="entry name" value="Alpha-D-phosphohexomutase, C-terminal domain"/>
    <property type="match status" value="1"/>
</dbReference>
<dbReference type="HAMAP" id="MF_01554_B">
    <property type="entry name" value="GlmM_B"/>
    <property type="match status" value="1"/>
</dbReference>
<dbReference type="InterPro" id="IPR005844">
    <property type="entry name" value="A-D-PHexomutase_a/b/a-I"/>
</dbReference>
<dbReference type="InterPro" id="IPR016055">
    <property type="entry name" value="A-D-PHexomutase_a/b/a-I/II/III"/>
</dbReference>
<dbReference type="InterPro" id="IPR005845">
    <property type="entry name" value="A-D-PHexomutase_a/b/a-II"/>
</dbReference>
<dbReference type="InterPro" id="IPR005846">
    <property type="entry name" value="A-D-PHexomutase_a/b/a-III"/>
</dbReference>
<dbReference type="InterPro" id="IPR005843">
    <property type="entry name" value="A-D-PHexomutase_C"/>
</dbReference>
<dbReference type="InterPro" id="IPR036900">
    <property type="entry name" value="A-D-PHexomutase_C_sf"/>
</dbReference>
<dbReference type="InterPro" id="IPR016066">
    <property type="entry name" value="A-D-PHexomutase_CS"/>
</dbReference>
<dbReference type="InterPro" id="IPR005841">
    <property type="entry name" value="Alpha-D-phosphohexomutase_SF"/>
</dbReference>
<dbReference type="InterPro" id="IPR006352">
    <property type="entry name" value="GlmM_bact"/>
</dbReference>
<dbReference type="InterPro" id="IPR050060">
    <property type="entry name" value="Phosphoglucosamine_mutase"/>
</dbReference>
<dbReference type="NCBIfam" id="TIGR01455">
    <property type="entry name" value="glmM"/>
    <property type="match status" value="1"/>
</dbReference>
<dbReference type="NCBIfam" id="NF008139">
    <property type="entry name" value="PRK10887.1"/>
    <property type="match status" value="1"/>
</dbReference>
<dbReference type="PANTHER" id="PTHR42946:SF1">
    <property type="entry name" value="PHOSPHOGLUCOMUTASE (ALPHA-D-GLUCOSE-1,6-BISPHOSPHATE-DEPENDENT)"/>
    <property type="match status" value="1"/>
</dbReference>
<dbReference type="PANTHER" id="PTHR42946">
    <property type="entry name" value="PHOSPHOHEXOSE MUTASE"/>
    <property type="match status" value="1"/>
</dbReference>
<dbReference type="Pfam" id="PF02878">
    <property type="entry name" value="PGM_PMM_I"/>
    <property type="match status" value="1"/>
</dbReference>
<dbReference type="Pfam" id="PF02879">
    <property type="entry name" value="PGM_PMM_II"/>
    <property type="match status" value="1"/>
</dbReference>
<dbReference type="Pfam" id="PF02880">
    <property type="entry name" value="PGM_PMM_III"/>
    <property type="match status" value="1"/>
</dbReference>
<dbReference type="Pfam" id="PF00408">
    <property type="entry name" value="PGM_PMM_IV"/>
    <property type="match status" value="1"/>
</dbReference>
<dbReference type="PRINTS" id="PR00509">
    <property type="entry name" value="PGMPMM"/>
</dbReference>
<dbReference type="SUPFAM" id="SSF55957">
    <property type="entry name" value="Phosphoglucomutase, C-terminal domain"/>
    <property type="match status" value="1"/>
</dbReference>
<dbReference type="SUPFAM" id="SSF53738">
    <property type="entry name" value="Phosphoglucomutase, first 3 domains"/>
    <property type="match status" value="3"/>
</dbReference>
<dbReference type="PROSITE" id="PS00710">
    <property type="entry name" value="PGM_PMM"/>
    <property type="match status" value="1"/>
</dbReference>
<reference key="1">
    <citation type="journal article" date="2003" name="Nat. Genet.">
        <title>Comparative analysis of the genome sequences of Bordetella pertussis, Bordetella parapertussis and Bordetella bronchiseptica.</title>
        <authorList>
            <person name="Parkhill J."/>
            <person name="Sebaihia M."/>
            <person name="Preston A."/>
            <person name="Murphy L.D."/>
            <person name="Thomson N.R."/>
            <person name="Harris D.E."/>
            <person name="Holden M.T.G."/>
            <person name="Churcher C.M."/>
            <person name="Bentley S.D."/>
            <person name="Mungall K.L."/>
            <person name="Cerdeno-Tarraga A.-M."/>
            <person name="Temple L."/>
            <person name="James K.D."/>
            <person name="Harris B."/>
            <person name="Quail M.A."/>
            <person name="Achtman M."/>
            <person name="Atkin R."/>
            <person name="Baker S."/>
            <person name="Basham D."/>
            <person name="Bason N."/>
            <person name="Cherevach I."/>
            <person name="Chillingworth T."/>
            <person name="Collins M."/>
            <person name="Cronin A."/>
            <person name="Davis P."/>
            <person name="Doggett J."/>
            <person name="Feltwell T."/>
            <person name="Goble A."/>
            <person name="Hamlin N."/>
            <person name="Hauser H."/>
            <person name="Holroyd S."/>
            <person name="Jagels K."/>
            <person name="Leather S."/>
            <person name="Moule S."/>
            <person name="Norberczak H."/>
            <person name="O'Neil S."/>
            <person name="Ormond D."/>
            <person name="Price C."/>
            <person name="Rabbinowitsch E."/>
            <person name="Rutter S."/>
            <person name="Sanders M."/>
            <person name="Saunders D."/>
            <person name="Seeger K."/>
            <person name="Sharp S."/>
            <person name="Simmonds M."/>
            <person name="Skelton J."/>
            <person name="Squares R."/>
            <person name="Squares S."/>
            <person name="Stevens K."/>
            <person name="Unwin L."/>
            <person name="Whitehead S."/>
            <person name="Barrell B.G."/>
            <person name="Maskell D.J."/>
        </authorList>
    </citation>
    <scope>NUCLEOTIDE SEQUENCE [LARGE SCALE GENOMIC DNA]</scope>
    <source>
        <strain>ATCC BAA-588 / NCTC 13252 / RB50</strain>
    </source>
</reference>
<proteinExistence type="inferred from homology"/>
<sequence length="452" mass="48300">MSQRKYFGTDGVRGEVGGPVINAAFALRLGYAAGRVLAREHREHASGRGRNRPQVVIGKDTRISGYMLESALEAGLSAAGIDVLLAGPVPTPAVAYLTRTLRLAAGIVISASHNPYQDNGIKFFSAHGMKLPDDIEAAIEQALDEPLGCVGSEELGRARRMADAQGRYIEFCKSTFPHDLDLNGLKLVVDAAHGAAYNVAPHVFRELGAEVHAIGVSPDGFNINKGVGALHPESLAEEVRARGADLGIALDGDADRLQMVDGTGRIYNGDELLYAIVRERMQRGPVAGVVGTLMTNYGLERQLQQIGVGFERANVGDRYVLEQMQARGWLYGGESSGHLLCLDCHTTGDGTIAALQVLTALRRADATLAEWVADLRMYPQKMINVPLAPGLDWKTHDGLARARGAVEAELAGRGRVLIRASGTEPKLRLMVEAEDEALAQASAQKLADSLGA</sequence>
<organism>
    <name type="scientific">Bordetella bronchiseptica (strain ATCC BAA-588 / NCTC 13252 / RB50)</name>
    <name type="common">Alcaligenes bronchisepticus</name>
    <dbReference type="NCBI Taxonomy" id="257310"/>
    <lineage>
        <taxon>Bacteria</taxon>
        <taxon>Pseudomonadati</taxon>
        <taxon>Pseudomonadota</taxon>
        <taxon>Betaproteobacteria</taxon>
        <taxon>Burkholderiales</taxon>
        <taxon>Alcaligenaceae</taxon>
        <taxon>Bordetella</taxon>
    </lineage>
</organism>
<accession>Q7WMD0</accession>